<comment type="function">
    <text evidence="1">Catalyzes the transformation of pimelate into pimeloyl-CoA with concomitant hydrolysis of ATP to AMP.</text>
</comment>
<comment type="catalytic activity">
    <reaction evidence="1">
        <text>heptanedioate + ATP + CoA = 6-carboxyhexanoyl-CoA + AMP + diphosphate</text>
        <dbReference type="Rhea" id="RHEA:14781"/>
        <dbReference type="ChEBI" id="CHEBI:30616"/>
        <dbReference type="ChEBI" id="CHEBI:33019"/>
        <dbReference type="ChEBI" id="CHEBI:36165"/>
        <dbReference type="ChEBI" id="CHEBI:57287"/>
        <dbReference type="ChEBI" id="CHEBI:57360"/>
        <dbReference type="ChEBI" id="CHEBI:456215"/>
        <dbReference type="EC" id="6.2.1.14"/>
    </reaction>
</comment>
<comment type="cofactor">
    <cofactor evidence="1">
        <name>Mg(2+)</name>
        <dbReference type="ChEBI" id="CHEBI:18420"/>
    </cofactor>
</comment>
<comment type="pathway">
    <text evidence="1">Metabolic intermediate metabolism; pimeloyl-CoA biosynthesis; pimeloyl-CoA from pimelate: step 1/1.</text>
</comment>
<comment type="subunit">
    <text evidence="1">Homodimer.</text>
</comment>
<comment type="similarity">
    <text evidence="1">Belongs to the BioW family.</text>
</comment>
<organism>
    <name type="scientific">Bacillus spizizenii (strain ATCC 23059 / NRRL B-14472 / W23)</name>
    <name type="common">Bacillus subtilis subsp. spizizenii</name>
    <dbReference type="NCBI Taxonomy" id="655816"/>
    <lineage>
        <taxon>Bacteria</taxon>
        <taxon>Bacillati</taxon>
        <taxon>Bacillota</taxon>
        <taxon>Bacilli</taxon>
        <taxon>Bacillales</taxon>
        <taxon>Bacillaceae</taxon>
        <taxon>Bacillus</taxon>
    </lineage>
</organism>
<proteinExistence type="inferred from homology"/>
<protein>
    <recommendedName>
        <fullName evidence="1">6-carboxyhexanoate--CoA ligase</fullName>
        <ecNumber evidence="1">6.2.1.14</ecNumber>
    </recommendedName>
    <alternativeName>
        <fullName evidence="1">Pimeloyl-CoA synthase</fullName>
    </alternativeName>
</protein>
<sequence length="258" mass="29460">MQEETFYSVRMRASMNGSHEDGGKHISGGERLIPFHEMKRTVNSLLEKGLSHSRGKPDFMQIQFEEVHEPIKTIQPLPVRTNEVSSPEEGQKLARLLLEREGVSREVIEKAYQQIISWSGVRGAVLFDIHSGKRIDQTKGKGVRVSRMDWPDANFEKWALRYHVPAHSRIKEALALASKVSRFPAAVAELCWSDDPDYITGYVAGKKMGYQRITALKEYGSEDGCRIFFIDGSEDVNTYIHDLEKQPILIEWEEDHDS</sequence>
<evidence type="ECO:0000255" key="1">
    <source>
        <dbReference type="HAMAP-Rule" id="MF_00668"/>
    </source>
</evidence>
<feature type="chain" id="PRO_0000412081" description="6-carboxyhexanoate--CoA ligase">
    <location>
        <begin position="1"/>
        <end position="258"/>
    </location>
</feature>
<reference key="1">
    <citation type="journal article" date="2011" name="Microbiology">
        <title>The genome sequence of Bacillus subtilis subsp. spizizenii W23: insights into speciation within the B. subtilis complex and into the history of B. subtilis genetics.</title>
        <authorList>
            <person name="Zeigler D.R."/>
        </authorList>
    </citation>
    <scope>NUCLEOTIDE SEQUENCE [LARGE SCALE GENOMIC DNA]</scope>
    <source>
        <strain>ATCC 23059 / NRRL B-14472 / W23</strain>
    </source>
</reference>
<gene>
    <name evidence="1" type="primary">bioW</name>
    <name type="ordered locus">BSUW23_14650</name>
</gene>
<keyword id="KW-0067">ATP-binding</keyword>
<keyword id="KW-0093">Biotin biosynthesis</keyword>
<keyword id="KW-0436">Ligase</keyword>
<keyword id="KW-0460">Magnesium</keyword>
<keyword id="KW-0547">Nucleotide-binding</keyword>
<dbReference type="EC" id="6.2.1.14" evidence="1"/>
<dbReference type="EMBL" id="CP002183">
    <property type="protein sequence ID" value="ADM38967.1"/>
    <property type="molecule type" value="Genomic_DNA"/>
</dbReference>
<dbReference type="SMR" id="E0TXE1"/>
<dbReference type="KEGG" id="bss:BSUW23_14650"/>
<dbReference type="HOGENOM" id="CLU_076858_0_0_9"/>
<dbReference type="UniPathway" id="UPA00999">
    <property type="reaction ID" value="UER00351"/>
</dbReference>
<dbReference type="Proteomes" id="UP000002233">
    <property type="component" value="Chromosome"/>
</dbReference>
<dbReference type="GO" id="GO:0042410">
    <property type="term" value="F:6-carboxyhexanoate-CoA ligase activity"/>
    <property type="evidence" value="ECO:0007669"/>
    <property type="project" value="UniProtKB-UniRule"/>
</dbReference>
<dbReference type="GO" id="GO:0005524">
    <property type="term" value="F:ATP binding"/>
    <property type="evidence" value="ECO:0007669"/>
    <property type="project" value="UniProtKB-KW"/>
</dbReference>
<dbReference type="GO" id="GO:0000287">
    <property type="term" value="F:magnesium ion binding"/>
    <property type="evidence" value="ECO:0007669"/>
    <property type="project" value="UniProtKB-UniRule"/>
</dbReference>
<dbReference type="GO" id="GO:0009102">
    <property type="term" value="P:biotin biosynthetic process"/>
    <property type="evidence" value="ECO:0007669"/>
    <property type="project" value="UniProtKB-UniRule"/>
</dbReference>
<dbReference type="HAMAP" id="MF_00668">
    <property type="entry name" value="BioW"/>
    <property type="match status" value="1"/>
</dbReference>
<dbReference type="InterPro" id="IPR005499">
    <property type="entry name" value="BioW"/>
</dbReference>
<dbReference type="NCBIfam" id="TIGR01204">
    <property type="entry name" value="bioW"/>
    <property type="match status" value="1"/>
</dbReference>
<dbReference type="NCBIfam" id="NF002360">
    <property type="entry name" value="PRK01322.1"/>
    <property type="match status" value="1"/>
</dbReference>
<dbReference type="Pfam" id="PF03744">
    <property type="entry name" value="BioW"/>
    <property type="match status" value="1"/>
</dbReference>
<name>BIOW_BACSH</name>
<accession>E0TXE1</accession>